<name>COAA_BREBN</name>
<organism>
    <name type="scientific">Brevibacillus brevis (strain 47 / JCM 6285 / NBRC 100599)</name>
    <dbReference type="NCBI Taxonomy" id="358681"/>
    <lineage>
        <taxon>Bacteria</taxon>
        <taxon>Bacillati</taxon>
        <taxon>Bacillota</taxon>
        <taxon>Bacilli</taxon>
        <taxon>Bacillales</taxon>
        <taxon>Paenibacillaceae</taxon>
        <taxon>Brevibacillus</taxon>
    </lineage>
</organism>
<gene>
    <name evidence="1" type="primary">coaA</name>
    <name type="ordered locus">BBR47_13100</name>
</gene>
<evidence type="ECO:0000255" key="1">
    <source>
        <dbReference type="HAMAP-Rule" id="MF_00215"/>
    </source>
</evidence>
<dbReference type="EC" id="2.7.1.33" evidence="1"/>
<dbReference type="EMBL" id="AP008955">
    <property type="protein sequence ID" value="BAH42287.1"/>
    <property type="molecule type" value="Genomic_DNA"/>
</dbReference>
<dbReference type="SMR" id="C0Z7P4"/>
<dbReference type="STRING" id="358681.BBR47_13100"/>
<dbReference type="KEGG" id="bbe:BBR47_13100"/>
<dbReference type="eggNOG" id="COG1072">
    <property type="taxonomic scope" value="Bacteria"/>
</dbReference>
<dbReference type="HOGENOM" id="CLU_053818_1_1_9"/>
<dbReference type="UniPathway" id="UPA00241">
    <property type="reaction ID" value="UER00352"/>
</dbReference>
<dbReference type="Proteomes" id="UP000001877">
    <property type="component" value="Chromosome"/>
</dbReference>
<dbReference type="GO" id="GO:0005737">
    <property type="term" value="C:cytoplasm"/>
    <property type="evidence" value="ECO:0007669"/>
    <property type="project" value="UniProtKB-SubCell"/>
</dbReference>
<dbReference type="GO" id="GO:0005524">
    <property type="term" value="F:ATP binding"/>
    <property type="evidence" value="ECO:0007669"/>
    <property type="project" value="UniProtKB-UniRule"/>
</dbReference>
<dbReference type="GO" id="GO:0004594">
    <property type="term" value="F:pantothenate kinase activity"/>
    <property type="evidence" value="ECO:0007669"/>
    <property type="project" value="UniProtKB-UniRule"/>
</dbReference>
<dbReference type="GO" id="GO:0015937">
    <property type="term" value="P:coenzyme A biosynthetic process"/>
    <property type="evidence" value="ECO:0007669"/>
    <property type="project" value="UniProtKB-UniRule"/>
</dbReference>
<dbReference type="CDD" id="cd02025">
    <property type="entry name" value="PanK"/>
    <property type="match status" value="1"/>
</dbReference>
<dbReference type="FunFam" id="3.40.50.300:FF:000242">
    <property type="entry name" value="Pantothenate kinase"/>
    <property type="match status" value="1"/>
</dbReference>
<dbReference type="Gene3D" id="3.40.50.300">
    <property type="entry name" value="P-loop containing nucleotide triphosphate hydrolases"/>
    <property type="match status" value="1"/>
</dbReference>
<dbReference type="HAMAP" id="MF_00215">
    <property type="entry name" value="Pantothen_kinase_1"/>
    <property type="match status" value="1"/>
</dbReference>
<dbReference type="InterPro" id="IPR027417">
    <property type="entry name" value="P-loop_NTPase"/>
</dbReference>
<dbReference type="InterPro" id="IPR004566">
    <property type="entry name" value="PanK"/>
</dbReference>
<dbReference type="InterPro" id="IPR006083">
    <property type="entry name" value="PRK/URK"/>
</dbReference>
<dbReference type="NCBIfam" id="TIGR00554">
    <property type="entry name" value="panK_bact"/>
    <property type="match status" value="1"/>
</dbReference>
<dbReference type="PANTHER" id="PTHR10285">
    <property type="entry name" value="URIDINE KINASE"/>
    <property type="match status" value="1"/>
</dbReference>
<dbReference type="Pfam" id="PF00485">
    <property type="entry name" value="PRK"/>
    <property type="match status" value="1"/>
</dbReference>
<dbReference type="PIRSF" id="PIRSF000545">
    <property type="entry name" value="Pantothenate_kin"/>
    <property type="match status" value="1"/>
</dbReference>
<dbReference type="SUPFAM" id="SSF52540">
    <property type="entry name" value="P-loop containing nucleoside triphosphate hydrolases"/>
    <property type="match status" value="1"/>
</dbReference>
<accession>C0Z7P4</accession>
<keyword id="KW-0067">ATP-binding</keyword>
<keyword id="KW-0173">Coenzyme A biosynthesis</keyword>
<keyword id="KW-0963">Cytoplasm</keyword>
<keyword id="KW-0418">Kinase</keyword>
<keyword id="KW-0547">Nucleotide-binding</keyword>
<keyword id="KW-1185">Reference proteome</keyword>
<keyword id="KW-0808">Transferase</keyword>
<comment type="catalytic activity">
    <reaction evidence="1">
        <text>(R)-pantothenate + ATP = (R)-4'-phosphopantothenate + ADP + H(+)</text>
        <dbReference type="Rhea" id="RHEA:16373"/>
        <dbReference type="ChEBI" id="CHEBI:10986"/>
        <dbReference type="ChEBI" id="CHEBI:15378"/>
        <dbReference type="ChEBI" id="CHEBI:29032"/>
        <dbReference type="ChEBI" id="CHEBI:30616"/>
        <dbReference type="ChEBI" id="CHEBI:456216"/>
        <dbReference type="EC" id="2.7.1.33"/>
    </reaction>
</comment>
<comment type="pathway">
    <text evidence="1">Cofactor biosynthesis; coenzyme A biosynthesis; CoA from (R)-pantothenate: step 1/5.</text>
</comment>
<comment type="subcellular location">
    <subcellularLocation>
        <location evidence="1">Cytoplasm</location>
    </subcellularLocation>
</comment>
<comment type="similarity">
    <text evidence="1">Belongs to the prokaryotic pantothenate kinase family.</text>
</comment>
<sequence length="320" mass="36573">MMERMYIPMASPYVTFNREQWSALRASTPLTISDNELSLLQGLNEKMSMTEVSDIYLPLSRLLNLYVGGTQELYQATHTFLGNQDGKVPFIIGIAGSVAVGKSTTARILQTLLSRWPNHPKVDLVTTDGFLYPNKVLEDRGIMKRKGFPESYDLRRFINFLSDVKSGLPEVKAPVYSHLVYDIVPDEWQTVRQPDILIVEGLNVLQPPRGDENDARISEVIVSDFFDFTIYVHAEEKHILQWYVERFKLLRQTAFSDPSSYFKRYASLSDEEATEVATGIWTEINGANLRQNILPTRVRAQLILDKGQNHMVQSVKLRKL</sequence>
<proteinExistence type="inferred from homology"/>
<reference key="1">
    <citation type="submission" date="2005-03" db="EMBL/GenBank/DDBJ databases">
        <title>Brevibacillus brevis strain 47, complete genome.</title>
        <authorList>
            <person name="Hosoyama A."/>
            <person name="Yamada R."/>
            <person name="Hongo Y."/>
            <person name="Terui Y."/>
            <person name="Ankai A."/>
            <person name="Masuyama W."/>
            <person name="Sekiguchi M."/>
            <person name="Takeda T."/>
            <person name="Asano K."/>
            <person name="Ohji S."/>
            <person name="Ichikawa N."/>
            <person name="Narita S."/>
            <person name="Aoki N."/>
            <person name="Miura H."/>
            <person name="Matsushita S."/>
            <person name="Sekigawa T."/>
            <person name="Yamagata H."/>
            <person name="Yoshikawa H."/>
            <person name="Udaka S."/>
            <person name="Tanikawa S."/>
            <person name="Fujita N."/>
        </authorList>
    </citation>
    <scope>NUCLEOTIDE SEQUENCE [LARGE SCALE GENOMIC DNA]</scope>
    <source>
        <strain>47 / JCM 6285 / NBRC 100599</strain>
    </source>
</reference>
<feature type="chain" id="PRO_1000124794" description="Pantothenate kinase">
    <location>
        <begin position="1"/>
        <end position="320"/>
    </location>
</feature>
<feature type="binding site" evidence="1">
    <location>
        <begin position="96"/>
        <end position="103"/>
    </location>
    <ligand>
        <name>ATP</name>
        <dbReference type="ChEBI" id="CHEBI:30616"/>
    </ligand>
</feature>
<protein>
    <recommendedName>
        <fullName evidence="1">Pantothenate kinase</fullName>
        <ecNumber evidence="1">2.7.1.33</ecNumber>
    </recommendedName>
    <alternativeName>
        <fullName evidence="1">Pantothenic acid kinase</fullName>
    </alternativeName>
</protein>